<protein>
    <recommendedName>
        <fullName>Centromere protein S</fullName>
        <shortName>CENP-S</shortName>
    </recommendedName>
    <alternativeName>
        <fullName>Apoptosis-inducing TAF9-like domain-containing protein 1</fullName>
    </alternativeName>
    <alternativeName>
        <fullName evidence="9">FANCM-associated histone fold protein 1</fullName>
    </alternativeName>
    <alternativeName>
        <fullName evidence="10">FANCM-interacting histone fold protein 1</fullName>
    </alternativeName>
    <alternativeName>
        <fullName>Fanconi anemia-associated polypeptide of 16 kDa</fullName>
    </alternativeName>
</protein>
<reference key="1">
    <citation type="submission" date="2002-06" db="EMBL/GenBank/DDBJ databases">
        <authorList>
            <person name="Cai Q."/>
            <person name="Guo J.H."/>
            <person name="Yu L."/>
        </authorList>
    </citation>
    <scope>NUCLEOTIDE SEQUENCE [MRNA] (ISOFORMS 2 AND 3)</scope>
</reference>
<reference key="2">
    <citation type="journal article" date="2006" name="Nature">
        <title>The DNA sequence and biological annotation of human chromosome 1.</title>
        <authorList>
            <person name="Gregory S.G."/>
            <person name="Barlow K.F."/>
            <person name="McLay K.E."/>
            <person name="Kaul R."/>
            <person name="Swarbreck D."/>
            <person name="Dunham A."/>
            <person name="Scott C.E."/>
            <person name="Howe K.L."/>
            <person name="Woodfine K."/>
            <person name="Spencer C.C.A."/>
            <person name="Jones M.C."/>
            <person name="Gillson C."/>
            <person name="Searle S."/>
            <person name="Zhou Y."/>
            <person name="Kokocinski F."/>
            <person name="McDonald L."/>
            <person name="Evans R."/>
            <person name="Phillips K."/>
            <person name="Atkinson A."/>
            <person name="Cooper R."/>
            <person name="Jones C."/>
            <person name="Hall R.E."/>
            <person name="Andrews T.D."/>
            <person name="Lloyd C."/>
            <person name="Ainscough R."/>
            <person name="Almeida J.P."/>
            <person name="Ambrose K.D."/>
            <person name="Anderson F."/>
            <person name="Andrew R.W."/>
            <person name="Ashwell R.I.S."/>
            <person name="Aubin K."/>
            <person name="Babbage A.K."/>
            <person name="Bagguley C.L."/>
            <person name="Bailey J."/>
            <person name="Beasley H."/>
            <person name="Bethel G."/>
            <person name="Bird C.P."/>
            <person name="Bray-Allen S."/>
            <person name="Brown J.Y."/>
            <person name="Brown A.J."/>
            <person name="Buckley D."/>
            <person name="Burton J."/>
            <person name="Bye J."/>
            <person name="Carder C."/>
            <person name="Chapman J.C."/>
            <person name="Clark S.Y."/>
            <person name="Clarke G."/>
            <person name="Clee C."/>
            <person name="Cobley V."/>
            <person name="Collier R.E."/>
            <person name="Corby N."/>
            <person name="Coville G.J."/>
            <person name="Davies J."/>
            <person name="Deadman R."/>
            <person name="Dunn M."/>
            <person name="Earthrowl M."/>
            <person name="Ellington A.G."/>
            <person name="Errington H."/>
            <person name="Frankish A."/>
            <person name="Frankland J."/>
            <person name="French L."/>
            <person name="Garner P."/>
            <person name="Garnett J."/>
            <person name="Gay L."/>
            <person name="Ghori M.R.J."/>
            <person name="Gibson R."/>
            <person name="Gilby L.M."/>
            <person name="Gillett W."/>
            <person name="Glithero R.J."/>
            <person name="Grafham D.V."/>
            <person name="Griffiths C."/>
            <person name="Griffiths-Jones S."/>
            <person name="Grocock R."/>
            <person name="Hammond S."/>
            <person name="Harrison E.S.I."/>
            <person name="Hart E."/>
            <person name="Haugen E."/>
            <person name="Heath P.D."/>
            <person name="Holmes S."/>
            <person name="Holt K."/>
            <person name="Howden P.J."/>
            <person name="Hunt A.R."/>
            <person name="Hunt S.E."/>
            <person name="Hunter G."/>
            <person name="Isherwood J."/>
            <person name="James R."/>
            <person name="Johnson C."/>
            <person name="Johnson D."/>
            <person name="Joy A."/>
            <person name="Kay M."/>
            <person name="Kershaw J.K."/>
            <person name="Kibukawa M."/>
            <person name="Kimberley A.M."/>
            <person name="King A."/>
            <person name="Knights A.J."/>
            <person name="Lad H."/>
            <person name="Laird G."/>
            <person name="Lawlor S."/>
            <person name="Leongamornlert D.A."/>
            <person name="Lloyd D.M."/>
            <person name="Loveland J."/>
            <person name="Lovell J."/>
            <person name="Lush M.J."/>
            <person name="Lyne R."/>
            <person name="Martin S."/>
            <person name="Mashreghi-Mohammadi M."/>
            <person name="Matthews L."/>
            <person name="Matthews N.S.W."/>
            <person name="McLaren S."/>
            <person name="Milne S."/>
            <person name="Mistry S."/>
            <person name="Moore M.J.F."/>
            <person name="Nickerson T."/>
            <person name="O'Dell C.N."/>
            <person name="Oliver K."/>
            <person name="Palmeiri A."/>
            <person name="Palmer S.A."/>
            <person name="Parker A."/>
            <person name="Patel D."/>
            <person name="Pearce A.V."/>
            <person name="Peck A.I."/>
            <person name="Pelan S."/>
            <person name="Phelps K."/>
            <person name="Phillimore B.J."/>
            <person name="Plumb R."/>
            <person name="Rajan J."/>
            <person name="Raymond C."/>
            <person name="Rouse G."/>
            <person name="Saenphimmachak C."/>
            <person name="Sehra H.K."/>
            <person name="Sheridan E."/>
            <person name="Shownkeen R."/>
            <person name="Sims S."/>
            <person name="Skuce C.D."/>
            <person name="Smith M."/>
            <person name="Steward C."/>
            <person name="Subramanian S."/>
            <person name="Sycamore N."/>
            <person name="Tracey A."/>
            <person name="Tromans A."/>
            <person name="Van Helmond Z."/>
            <person name="Wall M."/>
            <person name="Wallis J.M."/>
            <person name="White S."/>
            <person name="Whitehead S.L."/>
            <person name="Wilkinson J.E."/>
            <person name="Willey D.L."/>
            <person name="Williams H."/>
            <person name="Wilming L."/>
            <person name="Wray P.W."/>
            <person name="Wu Z."/>
            <person name="Coulson A."/>
            <person name="Vaudin M."/>
            <person name="Sulston J.E."/>
            <person name="Durbin R.M."/>
            <person name="Hubbard T."/>
            <person name="Wooster R."/>
            <person name="Dunham I."/>
            <person name="Carter N.P."/>
            <person name="McVean G."/>
            <person name="Ross M.T."/>
            <person name="Harrow J."/>
            <person name="Olson M.V."/>
            <person name="Beck S."/>
            <person name="Rogers J."/>
            <person name="Bentley D.R."/>
        </authorList>
    </citation>
    <scope>NUCLEOTIDE SEQUENCE [LARGE SCALE GENOMIC DNA]</scope>
</reference>
<reference key="3">
    <citation type="journal article" date="2004" name="Genome Res.">
        <title>The status, quality, and expansion of the NIH full-length cDNA project: the Mammalian Gene Collection (MGC).</title>
        <authorList>
            <consortium name="The MGC Project Team"/>
        </authorList>
    </citation>
    <scope>NUCLEOTIDE SEQUENCE [LARGE SCALE MRNA] (ISOFORM 1)</scope>
    <source>
        <tissue>Kidney</tissue>
    </source>
</reference>
<reference key="4">
    <citation type="journal article" date="2004" name="Br. J. Cancer">
        <title>A novel 1p36.2 located gene, APITD1, with tumour-suppressive properties and a putative p53-binding domain, shows low expression in neuroblastoma tumours.</title>
        <authorList>
            <person name="Krona C."/>
            <person name="Ejeskaer K."/>
            <person name="Caren H."/>
            <person name="Abel F."/>
            <person name="Sjoeberg R.-M."/>
            <person name="Martinsson T."/>
        </authorList>
    </citation>
    <scope>TISSUE SPECIFICITY</scope>
</reference>
<reference key="5">
    <citation type="journal article" date="2006" name="Nat. Cell Biol.">
        <title>The human CENP-A centromeric nucleosome-associated complex.</title>
        <authorList>
            <person name="Foltz D.R."/>
            <person name="Jansen L.E.T."/>
            <person name="Black B.E."/>
            <person name="Bailey A.O."/>
            <person name="Yates J.R. III"/>
            <person name="Cleveland D.W."/>
        </authorList>
    </citation>
    <scope>IDENTIFICATION BY MASS SPECTROMETRY</scope>
    <scope>IDENTIFICATION IN THE CENPA-CAD COMPLEX WITH CENPI; CENPK; CENPL; CENPO; CENPP CENPQ AND CENPR</scope>
</reference>
<reference key="6">
    <citation type="journal article" date="2009" name="J. Cell Biol.">
        <title>The CENP-S complex is essential for the stable assembly of outer kinetochore structure.</title>
        <authorList>
            <person name="Amano M."/>
            <person name="Suzuki A."/>
            <person name="Hori T."/>
            <person name="Backer C."/>
            <person name="Okawa K."/>
            <person name="Cheeseman I.M."/>
            <person name="Fukagawa T."/>
        </authorList>
    </citation>
    <scope>FUNCTION</scope>
    <scope>IDENTIFICATION BY MASS SPECTROMETRY</scope>
    <scope>INTERACTION WITH CENPX</scope>
    <scope>SUBCELLULAR LOCATION</scope>
</reference>
<reference key="7">
    <citation type="journal article" date="2010" name="Mol. Cell">
        <title>A histone-fold complex and FANCM form a conserved DNA-remodeling complex to maintain genome stability.</title>
        <authorList>
            <person name="Yan Z."/>
            <person name="Delannoy M."/>
            <person name="Ling C."/>
            <person name="Daee D."/>
            <person name="Osman F."/>
            <person name="Muniandy P.A."/>
            <person name="Shen X."/>
            <person name="Oostra A.B."/>
            <person name="Du H."/>
            <person name="Steltenpool J."/>
            <person name="Lin T."/>
            <person name="Schuster B."/>
            <person name="Decaillet C."/>
            <person name="Stasiak A."/>
            <person name="Stasiak A.Z."/>
            <person name="Stone S."/>
            <person name="Hoatlin M.E."/>
            <person name="Schindler D."/>
            <person name="Woodcock C.L."/>
            <person name="Joenje H."/>
            <person name="Sen R."/>
            <person name="de Winter J.P."/>
            <person name="Li L."/>
            <person name="Seidman M.M."/>
            <person name="Whitby M.C."/>
            <person name="Myung K."/>
            <person name="Constantinousend A."/>
            <person name="Wang W."/>
        </authorList>
    </citation>
    <scope>FUNCTION</scope>
    <scope>IDENTIFICATION BY MASS SPECTROMETRY</scope>
    <scope>IDENTIFICATION IN THE FA CORE COMPLEX</scope>
    <scope>IDENTIFICATION IN THE BRAFT COMPLEX</scope>
    <scope>INTERACTION WITH CENPX AND FANCM</scope>
    <scope>DNA-BINDING</scope>
    <scope>SUBCELLULAR LOCATION</scope>
    <scope>MUTAGENESIS OF 73-LYS-ARG-74 AND 87-ARG-ARG-88</scope>
</reference>
<reference key="8">
    <citation type="journal article" date="2010" name="Mol. Cell">
        <title>MHF1-MHF2, a histone-fold-containing protein complex, participates in the Fanconi anemia pathway via FANCM.</title>
        <authorList>
            <person name="Singh T.R."/>
            <person name="Saro D."/>
            <person name="Ali A.M."/>
            <person name="Zheng X.-F."/>
            <person name="Du C."/>
            <person name="Killen M.W."/>
            <person name="Sachpatzidis A."/>
            <person name="Wahengbam K."/>
            <person name="Pierce A.J."/>
            <person name="Xiong Y."/>
            <person name="Sung P."/>
            <person name="Meetei A.R."/>
        </authorList>
    </citation>
    <scope>FUNCTION</scope>
    <scope>IDENTIFICATION BY MASS SPECTROMETRY</scope>
    <scope>IDENTIFICATION IN THE FA CORE COMPLEX</scope>
    <scope>INTERACTION WITH CENPX AND FANCM</scope>
    <scope>SUBCELLULAR LOCATION</scope>
    <scope>DNA-BINDING</scope>
</reference>
<reference key="9">
    <citation type="journal article" date="2012" name="Cell">
        <title>CENP-T-W-S-X forms a unique centromeric chromatin structure with a histone-like fold.</title>
        <authorList>
            <person name="Nishino T."/>
            <person name="Takeuchi K."/>
            <person name="Gascoigne K.E."/>
            <person name="Suzuki A."/>
            <person name="Hori T."/>
            <person name="Oyama T."/>
            <person name="Morikawa K."/>
            <person name="Cheeseman I.M."/>
            <person name="Fukagawa T."/>
        </authorList>
    </citation>
    <scope>FUNCTION</scope>
    <scope>INTERACTION WITH CENPT; CENPW AND CEPNX</scope>
</reference>
<reference key="10">
    <citation type="journal article" date="2012" name="Proc. Natl. Acad. Sci. U.S.A.">
        <title>N-terminal acetylome analyses and functional insights of the N-terminal acetyltransferase NatB.</title>
        <authorList>
            <person name="Van Damme P."/>
            <person name="Lasa M."/>
            <person name="Polevoda B."/>
            <person name="Gazquez C."/>
            <person name="Elosegui-Artola A."/>
            <person name="Kim D.S."/>
            <person name="De Juan-Pardo E."/>
            <person name="Demeyer K."/>
            <person name="Hole K."/>
            <person name="Larrea E."/>
            <person name="Timmerman E."/>
            <person name="Prieto J."/>
            <person name="Arnesen T."/>
            <person name="Sherman F."/>
            <person name="Gevaert K."/>
            <person name="Aldabe R."/>
        </authorList>
    </citation>
    <scope>ACETYLATION [LARGE SCALE ANALYSIS] AT MET-1</scope>
    <scope>IDENTIFICATION BY MASS SPECTROMETRY [LARGE SCALE ANALYSIS]</scope>
</reference>
<reference key="11">
    <citation type="journal article" date="2014" name="Open Biol.">
        <title>A CENP-S/X complex assembles at the centromere in S and G2 phases of the human cell cycle.</title>
        <authorList>
            <person name="Dornblut C."/>
            <person name="Quinn N."/>
            <person name="Monajambashi S."/>
            <person name="Prendergast L."/>
            <person name="van Vuuren C."/>
            <person name="Muench S."/>
            <person name="Deng W."/>
            <person name="Leonhardt H."/>
            <person name="Cardoso M.C."/>
            <person name="Hoischen C."/>
            <person name="Diekmann S."/>
            <person name="Sullivan K.F."/>
        </authorList>
    </citation>
    <scope>IDENTIFICATION IN THE CENP-T-W-S-X COMPLEX</scope>
    <scope>SUBCELLULAR LOCATION</scope>
    <scope>DEVELOPMENTAL STAGE</scope>
</reference>
<organism>
    <name type="scientific">Homo sapiens</name>
    <name type="common">Human</name>
    <dbReference type="NCBI Taxonomy" id="9606"/>
    <lineage>
        <taxon>Eukaryota</taxon>
        <taxon>Metazoa</taxon>
        <taxon>Chordata</taxon>
        <taxon>Craniata</taxon>
        <taxon>Vertebrata</taxon>
        <taxon>Euteleostomi</taxon>
        <taxon>Mammalia</taxon>
        <taxon>Eutheria</taxon>
        <taxon>Euarchontoglires</taxon>
        <taxon>Primates</taxon>
        <taxon>Haplorrhini</taxon>
        <taxon>Catarrhini</taxon>
        <taxon>Hominidae</taxon>
        <taxon>Homo</taxon>
    </lineage>
</organism>
<dbReference type="EMBL" id="AF516753">
    <property type="protein sequence ID" value="AAM61954.1"/>
    <property type="molecule type" value="mRNA"/>
</dbReference>
<dbReference type="EMBL" id="AF521016">
    <property type="protein sequence ID" value="AAM70482.1"/>
    <property type="molecule type" value="mRNA"/>
</dbReference>
<dbReference type="EMBL" id="AL139424">
    <property type="status" value="NOT_ANNOTATED_CDS"/>
    <property type="molecule type" value="Genomic_DNA"/>
</dbReference>
<dbReference type="EMBL" id="AL354956">
    <property type="status" value="NOT_ANNOTATED_CDS"/>
    <property type="molecule type" value="Genomic_DNA"/>
</dbReference>
<dbReference type="EMBL" id="BC029430">
    <property type="protein sequence ID" value="AAH29430.1"/>
    <property type="molecule type" value="mRNA"/>
</dbReference>
<dbReference type="RefSeq" id="NP_001257446.1">
    <molecule id="Q8N2Z9-1"/>
    <property type="nucleotide sequence ID" value="NM_001270517.1"/>
</dbReference>
<dbReference type="RefSeq" id="NP_940946.1">
    <molecule id="Q8N2Z9-2"/>
    <property type="nucleotide sequence ID" value="NM_198544.3"/>
</dbReference>
<dbReference type="RefSeq" id="NP_950171.2">
    <molecule id="Q8N2Z9-3"/>
    <property type="nucleotide sequence ID" value="NM_199006.2"/>
</dbReference>
<dbReference type="RefSeq" id="NP_954988.1">
    <molecule id="Q8N2Z9-1"/>
    <property type="nucleotide sequence ID" value="NM_199294.3"/>
</dbReference>
<dbReference type="PDB" id="4DRA">
    <property type="method" value="X-ray"/>
    <property type="resolution" value="2.41 A"/>
    <property type="chains" value="A/B/C/D=1-107"/>
</dbReference>
<dbReference type="PDB" id="4DRB">
    <property type="method" value="X-ray"/>
    <property type="resolution" value="2.63 A"/>
    <property type="chains" value="A/B/D/E/G/H=1-114"/>
</dbReference>
<dbReference type="PDB" id="4E44">
    <property type="method" value="X-ray"/>
    <property type="resolution" value="2.10 A"/>
    <property type="chains" value="A/C=1-110"/>
</dbReference>
<dbReference type="PDB" id="4E45">
    <property type="method" value="X-ray"/>
    <property type="resolution" value="2.00 A"/>
    <property type="chains" value="A/C/F/H/K/M=1-110"/>
</dbReference>
<dbReference type="PDB" id="4NDY">
    <property type="method" value="X-ray"/>
    <property type="resolution" value="7.00 A"/>
    <property type="chains" value="A/C/G/I/J/K/Q/R/S/T=14-105"/>
</dbReference>
<dbReference type="PDB" id="4NE1">
    <property type="method" value="X-ray"/>
    <property type="resolution" value="6.50 A"/>
    <property type="chains" value="A/C/G/I/J/K/Q/R/S/T/Y/a/c/e/f/g/k/l/m/n=14-118"/>
</dbReference>
<dbReference type="PDB" id="4NE3">
    <property type="method" value="X-ray"/>
    <property type="resolution" value="1.80 A"/>
    <property type="chains" value="A=14-105"/>
</dbReference>
<dbReference type="PDB" id="4NE5">
    <property type="method" value="X-ray"/>
    <property type="resolution" value="2.50 A"/>
    <property type="chains" value="A/C/E/G=14-105"/>
</dbReference>
<dbReference type="PDB" id="4NE6">
    <property type="method" value="X-ray"/>
    <property type="resolution" value="2.10 A"/>
    <property type="chains" value="A/C=14-105"/>
</dbReference>
<dbReference type="PDB" id="7R5S">
    <property type="method" value="EM"/>
    <property type="resolution" value="2.83 A"/>
    <property type="chains" value="S=1-138"/>
</dbReference>
<dbReference type="PDB" id="7XHN">
    <property type="method" value="EM"/>
    <property type="resolution" value="3.71 A"/>
    <property type="chains" value="S=1-138"/>
</dbReference>
<dbReference type="PDB" id="7XHO">
    <property type="method" value="EM"/>
    <property type="resolution" value="3.29 A"/>
    <property type="chains" value="S=1-138"/>
</dbReference>
<dbReference type="PDB" id="7YWX">
    <property type="method" value="EM"/>
    <property type="resolution" value="12.00 A"/>
    <property type="chains" value="S=1-138"/>
</dbReference>
<dbReference type="PDBsum" id="4DRA"/>
<dbReference type="PDBsum" id="4DRB"/>
<dbReference type="PDBsum" id="4E44"/>
<dbReference type="PDBsum" id="4E45"/>
<dbReference type="PDBsum" id="4NDY"/>
<dbReference type="PDBsum" id="4NE1"/>
<dbReference type="PDBsum" id="4NE3"/>
<dbReference type="PDBsum" id="4NE5"/>
<dbReference type="PDBsum" id="4NE6"/>
<dbReference type="PDBsum" id="7R5S"/>
<dbReference type="PDBsum" id="7XHN"/>
<dbReference type="PDBsum" id="7XHO"/>
<dbReference type="PDBsum" id="7YWX"/>
<dbReference type="EMDB" id="EMD-14336"/>
<dbReference type="EMDB" id="EMD-14351"/>
<dbReference type="EMDB" id="EMD-33196"/>
<dbReference type="EMDB" id="EMD-33197"/>
<dbReference type="SMR" id="Q8N2Z9"/>
<dbReference type="BioGRID" id="132044">
    <property type="interactions" value="36"/>
</dbReference>
<dbReference type="BioGRID" id="1529300">
    <property type="interactions" value="4"/>
</dbReference>
<dbReference type="ComplexPortal" id="CPX-5646">
    <property type="entry name" value="Kinetochore CCAN complex"/>
</dbReference>
<dbReference type="ComplexPortal" id="CPX-6266">
    <property type="entry name" value="Fanconi anemia FANCM-FAAP24-MHF anchoring complex"/>
</dbReference>
<dbReference type="CORUM" id="Q8N2Z9"/>
<dbReference type="FunCoup" id="Q8N2Z9">
    <property type="interactions" value="1293"/>
</dbReference>
<dbReference type="IntAct" id="Q8N2Z9">
    <property type="interactions" value="15"/>
</dbReference>
<dbReference type="MINT" id="Q8N2Z9"/>
<dbReference type="STRING" id="9606.ENSP00000308583"/>
<dbReference type="iPTMnet" id="Q8N2Z9"/>
<dbReference type="MetOSite" id="Q8N2Z9"/>
<dbReference type="PhosphoSitePlus" id="Q8N2Z9"/>
<dbReference type="BioMuta" id="CENPS"/>
<dbReference type="DMDM" id="74759833"/>
<dbReference type="jPOST" id="Q8N2Z9"/>
<dbReference type="MassIVE" id="Q8N2Z9"/>
<dbReference type="PaxDb" id="9606-ENSP00000308583"/>
<dbReference type="PeptideAtlas" id="Q8N2Z9"/>
<dbReference type="ProteomicsDB" id="71742">
    <molecule id="Q8N2Z9-1"/>
</dbReference>
<dbReference type="ProteomicsDB" id="71743">
    <molecule id="Q8N2Z9-2"/>
</dbReference>
<dbReference type="ProteomicsDB" id="71744">
    <molecule id="Q8N2Z9-3"/>
</dbReference>
<dbReference type="Pumba" id="Q8N2Z9"/>
<dbReference type="Antibodypedia" id="34792">
    <property type="antibodies" value="86 antibodies from 19 providers"/>
</dbReference>
<dbReference type="DNASU" id="378708"/>
<dbReference type="Ensembl" id="ENST00000309048.8">
    <molecule id="Q8N2Z9-1"/>
    <property type="protein sequence ID" value="ENSP00000308583.2"/>
    <property type="gene ID" value="ENSG00000175279.22"/>
</dbReference>
<dbReference type="GeneID" id="100526739"/>
<dbReference type="GeneID" id="378708"/>
<dbReference type="KEGG" id="hsa:100526739"/>
<dbReference type="KEGG" id="hsa:378708"/>
<dbReference type="MANE-Select" id="ENST00000309048.8">
    <property type="protein sequence ID" value="ENSP00000308583.2"/>
    <property type="RefSeq nucleotide sequence ID" value="NM_199294.3"/>
    <property type="RefSeq protein sequence ID" value="NP_954988.1"/>
</dbReference>
<dbReference type="UCSC" id="uc001are.4">
    <molecule id="Q8N2Z9-1"/>
    <property type="organism name" value="human"/>
</dbReference>
<dbReference type="AGR" id="HGNC:23163"/>
<dbReference type="AGR" id="HGNC:38843"/>
<dbReference type="CTD" id="100526739"/>
<dbReference type="CTD" id="378708"/>
<dbReference type="DisGeNET" id="100526739"/>
<dbReference type="DisGeNET" id="378708"/>
<dbReference type="GeneCards" id="CENPS"/>
<dbReference type="HGNC" id="HGNC:23163">
    <property type="gene designation" value="CENPS"/>
</dbReference>
<dbReference type="HPA" id="ENSG00000175279">
    <property type="expression patterns" value="Tissue enhanced (testis)"/>
</dbReference>
<dbReference type="MIM" id="609130">
    <property type="type" value="gene"/>
</dbReference>
<dbReference type="neXtProt" id="NX_Q8N2Z9"/>
<dbReference type="OpenTargets" id="ENSG00000175279"/>
<dbReference type="PharmGKB" id="PA134861614"/>
<dbReference type="VEuPathDB" id="HostDB:ENSG00000175279"/>
<dbReference type="eggNOG" id="ENOG502S62X">
    <property type="taxonomic scope" value="Eukaryota"/>
</dbReference>
<dbReference type="GeneTree" id="ENSGT00510000048007"/>
<dbReference type="HOGENOM" id="CLU_100369_0_0_1"/>
<dbReference type="InParanoid" id="Q8N2Z9"/>
<dbReference type="OMA" id="WTQIENV"/>
<dbReference type="OrthoDB" id="1872155at2759"/>
<dbReference type="PAN-GO" id="Q8N2Z9">
    <property type="GO annotations" value="5 GO annotations based on evolutionary models"/>
</dbReference>
<dbReference type="PhylomeDB" id="Q8N2Z9"/>
<dbReference type="TreeFam" id="TF300253"/>
<dbReference type="PathwayCommons" id="Q8N2Z9"/>
<dbReference type="Reactome" id="R-HSA-141444">
    <property type="pathway name" value="Amplification of signal from unattached kinetochores via a MAD2 inhibitory signal"/>
</dbReference>
<dbReference type="Reactome" id="R-HSA-2467813">
    <property type="pathway name" value="Separation of Sister Chromatids"/>
</dbReference>
<dbReference type="Reactome" id="R-HSA-2500257">
    <property type="pathway name" value="Resolution of Sister Chromatid Cohesion"/>
</dbReference>
<dbReference type="Reactome" id="R-HSA-5663220">
    <property type="pathway name" value="RHO GTPases Activate Formins"/>
</dbReference>
<dbReference type="Reactome" id="R-HSA-606279">
    <property type="pathway name" value="Deposition of new CENPA-containing nucleosomes at the centromere"/>
</dbReference>
<dbReference type="Reactome" id="R-HSA-6783310">
    <property type="pathway name" value="Fanconi Anemia Pathway"/>
</dbReference>
<dbReference type="Reactome" id="R-HSA-68877">
    <property type="pathway name" value="Mitotic Prometaphase"/>
</dbReference>
<dbReference type="Reactome" id="R-HSA-9648025">
    <property type="pathway name" value="EML4 and NUDC in mitotic spindle formation"/>
</dbReference>
<dbReference type="Reactome" id="R-HSA-9833482">
    <property type="pathway name" value="PKR-mediated signaling"/>
</dbReference>
<dbReference type="SignaLink" id="Q8N2Z9"/>
<dbReference type="SIGNOR" id="Q8N2Z9"/>
<dbReference type="BioGRID-ORCS" id="100526739">
    <property type="hits" value="24 hits in 1009 CRISPR screens"/>
</dbReference>
<dbReference type="BioGRID-ORCS" id="378708">
    <property type="hits" value="148 hits in 1049 CRISPR screens"/>
</dbReference>
<dbReference type="ChiTaRS" id="CENPS">
    <property type="organism name" value="human"/>
</dbReference>
<dbReference type="EvolutionaryTrace" id="Q8N2Z9"/>
<dbReference type="Pharos" id="Q8N2Z9">
    <property type="development level" value="Tbio"/>
</dbReference>
<dbReference type="PRO" id="PR:Q8N2Z9"/>
<dbReference type="Proteomes" id="UP000005640">
    <property type="component" value="Chromosome 1"/>
</dbReference>
<dbReference type="RNAct" id="Q8N2Z9">
    <property type="molecule type" value="protein"/>
</dbReference>
<dbReference type="Bgee" id="ENSG00000175279">
    <property type="expression patterns" value="Expressed in left testis and 178 other cell types or tissues"/>
</dbReference>
<dbReference type="ExpressionAtlas" id="Q8N2Z9">
    <property type="expression patterns" value="baseline and differential"/>
</dbReference>
<dbReference type="GO" id="GO:0000785">
    <property type="term" value="C:chromatin"/>
    <property type="evidence" value="ECO:0000314"/>
    <property type="project" value="ComplexPortal"/>
</dbReference>
<dbReference type="GO" id="GO:0005829">
    <property type="term" value="C:cytosol"/>
    <property type="evidence" value="ECO:0000304"/>
    <property type="project" value="Reactome"/>
</dbReference>
<dbReference type="GO" id="GO:0071821">
    <property type="term" value="C:FANCM-MHF complex"/>
    <property type="evidence" value="ECO:0000314"/>
    <property type="project" value="UniProtKB"/>
</dbReference>
<dbReference type="GO" id="GO:0043240">
    <property type="term" value="C:Fanconi anaemia nuclear complex"/>
    <property type="evidence" value="ECO:0000314"/>
    <property type="project" value="UniProtKB"/>
</dbReference>
<dbReference type="GO" id="GO:0000939">
    <property type="term" value="C:inner kinetochore"/>
    <property type="evidence" value="ECO:0000353"/>
    <property type="project" value="ComplexPortal"/>
</dbReference>
<dbReference type="GO" id="GO:0005654">
    <property type="term" value="C:nucleoplasm"/>
    <property type="evidence" value="ECO:0000304"/>
    <property type="project" value="Reactome"/>
</dbReference>
<dbReference type="GO" id="GO:0005634">
    <property type="term" value="C:nucleus"/>
    <property type="evidence" value="ECO:0000303"/>
    <property type="project" value="ComplexPortal"/>
</dbReference>
<dbReference type="GO" id="GO:0003682">
    <property type="term" value="F:chromatin binding"/>
    <property type="evidence" value="ECO:0000314"/>
    <property type="project" value="UniProtKB"/>
</dbReference>
<dbReference type="GO" id="GO:0003677">
    <property type="term" value="F:DNA binding"/>
    <property type="evidence" value="ECO:0000314"/>
    <property type="project" value="UniProtKB"/>
</dbReference>
<dbReference type="GO" id="GO:0046982">
    <property type="term" value="F:protein heterodimerization activity"/>
    <property type="evidence" value="ECO:0007669"/>
    <property type="project" value="InterPro"/>
</dbReference>
<dbReference type="GO" id="GO:0051301">
    <property type="term" value="P:cell division"/>
    <property type="evidence" value="ECO:0007669"/>
    <property type="project" value="UniProtKB-KW"/>
</dbReference>
<dbReference type="GO" id="GO:0007059">
    <property type="term" value="P:chromosome segregation"/>
    <property type="evidence" value="ECO:0000303"/>
    <property type="project" value="ComplexPortal"/>
</dbReference>
<dbReference type="GO" id="GO:0006974">
    <property type="term" value="P:DNA damage response"/>
    <property type="evidence" value="ECO:0000314"/>
    <property type="project" value="UniProtKB"/>
</dbReference>
<dbReference type="GO" id="GO:0006281">
    <property type="term" value="P:DNA repair"/>
    <property type="evidence" value="ECO:0000314"/>
    <property type="project" value="UniProtKB"/>
</dbReference>
<dbReference type="GO" id="GO:0036297">
    <property type="term" value="P:interstrand cross-link repair"/>
    <property type="evidence" value="ECO:0000314"/>
    <property type="project" value="ComplexPortal"/>
</dbReference>
<dbReference type="GO" id="GO:0031398">
    <property type="term" value="P:positive regulation of protein ubiquitination"/>
    <property type="evidence" value="ECO:0000304"/>
    <property type="project" value="UniProtKB"/>
</dbReference>
<dbReference type="GO" id="GO:0031297">
    <property type="term" value="P:replication fork processing"/>
    <property type="evidence" value="ECO:0000315"/>
    <property type="project" value="UniProtKB"/>
</dbReference>
<dbReference type="GO" id="GO:0000712">
    <property type="term" value="P:resolution of meiotic recombination intermediates"/>
    <property type="evidence" value="ECO:0000315"/>
    <property type="project" value="UniProtKB"/>
</dbReference>
<dbReference type="CDD" id="cd22919">
    <property type="entry name" value="HFD_CENP-S"/>
    <property type="match status" value="1"/>
</dbReference>
<dbReference type="FunFam" id="1.10.20.10:FF:000063">
    <property type="entry name" value="Centromere protein S"/>
    <property type="match status" value="1"/>
</dbReference>
<dbReference type="Gene3D" id="1.10.20.10">
    <property type="entry name" value="Histone, subunit A"/>
    <property type="match status" value="1"/>
</dbReference>
<dbReference type="IDEAL" id="IID00620"/>
<dbReference type="InterPro" id="IPR029003">
    <property type="entry name" value="CENP-S/Mhf1"/>
</dbReference>
<dbReference type="InterPro" id="IPR009072">
    <property type="entry name" value="Histone-fold"/>
</dbReference>
<dbReference type="PANTHER" id="PTHR22980:SF0">
    <property type="entry name" value="CENTROMERE PROTEIN S"/>
    <property type="match status" value="1"/>
</dbReference>
<dbReference type="PANTHER" id="PTHR22980">
    <property type="entry name" value="CORTISTATIN"/>
    <property type="match status" value="1"/>
</dbReference>
<dbReference type="Pfam" id="PF15630">
    <property type="entry name" value="CENP-S"/>
    <property type="match status" value="1"/>
</dbReference>
<dbReference type="SUPFAM" id="SSF47113">
    <property type="entry name" value="Histone-fold"/>
    <property type="match status" value="1"/>
</dbReference>
<accession>Q8N2Z9</accession>
<accession>Q8NFE5</accession>
<accession>Q8NFG5</accession>
<comment type="function">
    <text evidence="4 5 6 7">DNA-binding component of the Fanconi anemia (FA) core complex. Required for the normal activation of the FA pathway, leading to monoubiquitination of the FANCI-FANCD2 complex in response to DNA damage, cellular resistance to DNA cross-linking drugs, and prevention of chromosomal breakage (PubMed:20347428, PubMed:20347429). In complex with CENPX (MHF heterodimer), crucial cofactor for FANCM in both binding and ATP-dependent remodeling of DNA. Stabilizes FANCM (PubMed:20347428, PubMed:20347429). In complex with CENPX and FANCM (but not other FANC proteins), rapidly recruited to blocked forks and promotes gene conversion at blocked replication forks (PubMed:20347428). In complex with CENPT, CENPW and CENPX (CENP-T-W-S-X heterotetramer), involved in the formation of a functional kinetochore outer plate, which is essential for kinetochore-microtubule attachment and faithful mitotic progression (PubMed:19620631). As a component of MHF and CENP-T-W-S-X complexes, binds DNA and bends it to form a nucleosome-like structure (PubMed:20347428, PubMed:22304917). DNA-binding function is fulfilled in the presence of CENPX, with the following preference for DNA substates: Holliday junction &gt; double-stranded &gt; splay arm &gt; single-stranded. Does not bind DNA on its own (PubMed:20347428, PubMed:20347429).</text>
</comment>
<comment type="subunit">
    <text evidence="3 4 5 6 7 8">Heterodimer with CENPX, sometimes called MHF; this interaction stabilizes both partners (PubMed:19620631, PubMed:20347428, PubMed:20347429, PubMed:24522885). MHF heterodimers can assemble to form tetrameric structures (PubMed:22304917). MHF also coassemble with CENPT-CENPW heterodimers at centromeres to form the tetrameric CENP-T-W-S-X complex (PubMed:22304917, PubMed:24522885). Forms a discrete complex with FANCM and CENPX, called FANCM-MHF; this interaction, probably mediated by direct binding between CENPS and FANCM, leads to synergistic activation of double-stranded DNA binding and strongly stimulates FANCM-mediated DNA remodeling (PubMed:20347428, PubMed:20347429). Recruited by FANCM to the Fanconi anemia (FA) core complex, which consists of CENPS, CENPX, FANCA, FANCB, FANCC, FANCE, FANCF, FANCG, FANCL, FANCM, FAAP24 and FAAP100. The FA core complex associates with Bloom syndrome (BLM) complex, which consists of at least BLM, DNA topoisomerase 3-alpha (TOP3A), RMI1/BLAP75, RPA1/RPA70 and RPA2/RPA32. The super complex between FA and BLM is called BRAFT (PubMed:20347428, PubMed:20347429). Component of the CENPA-CAD complex, composed of CENPI, CENPK, CENPL, CENPO, CENPP, CENPQ, CENPR and CENPS. The CENPA-CAD complex is probably recruited on centromeres by the CENPA-NAC complex, composed of at least CENPA, CENPC, CENPH, CENPM, CENPN, CENPT and CENPU (PubMed:16622419).</text>
</comment>
<comment type="interaction">
    <interactant intactId="EBI-5529649">
        <id>Q8N2Z9</id>
    </interactant>
    <interactant intactId="EBI-5529694">
        <id>A8MT69</id>
        <label>CENPX</label>
    </interactant>
    <organismsDiffer>false</organismsDiffer>
    <experiments>8</experiments>
</comment>
<comment type="interaction">
    <interactant intactId="EBI-5529649">
        <id>Q8N2Z9</id>
    </interactant>
    <interactant intactId="EBI-11962928">
        <id>Q9UI47-2</id>
        <label>CTNNA3</label>
    </interactant>
    <organismsDiffer>false</organismsDiffer>
    <experiments>3</experiments>
</comment>
<comment type="interaction">
    <interactant intactId="EBI-5529649">
        <id>Q8N2Z9</id>
    </interactant>
    <interactant intactId="EBI-10172004">
        <id>Q8IX15-3</id>
        <label>HOMEZ</label>
    </interactant>
    <organismsDiffer>false</organismsDiffer>
    <experiments>3</experiments>
</comment>
<comment type="interaction">
    <interactant intactId="EBI-5529649">
        <id>Q8N2Z9</id>
    </interactant>
    <interactant intactId="EBI-466029">
        <id>P42858</id>
        <label>HTT</label>
    </interactant>
    <organismsDiffer>false</organismsDiffer>
    <experiments>3</experiments>
</comment>
<comment type="interaction">
    <interactant intactId="EBI-5529649">
        <id>Q8N2Z9</id>
    </interactant>
    <interactant intactId="EBI-2865388">
        <id>Q969G2</id>
        <label>LHX4</label>
    </interactant>
    <organismsDiffer>false</organismsDiffer>
    <experiments>3</experiments>
</comment>
<comment type="interaction">
    <interactant intactId="EBI-5529649">
        <id>Q8N2Z9</id>
    </interactant>
    <interactant intactId="EBI-5235340">
        <id>Q7Z699</id>
        <label>SPRED1</label>
    </interactant>
    <organismsDiffer>false</organismsDiffer>
    <experiments>3</experiments>
</comment>
<comment type="subcellular location">
    <subcellularLocation>
        <location evidence="4 5 8">Nucleus</location>
    </subcellularLocation>
    <subcellularLocation>
        <location evidence="4 8">Chromosome</location>
        <location evidence="4 8">Centromere</location>
    </subcellularLocation>
    <subcellularLocation>
        <location evidence="4">Chromosome</location>
        <location evidence="4">Centromere</location>
        <location evidence="4">Kinetochore</location>
    </subcellularLocation>
    <text evidence="4 5 8">Assembly of CENPS and CENPX and its partner subunits CENPT and CENPW at centromeres occurs through a dynamic exchange mechanism. Although exchange is continuous in the cell cycle, de novo assembly starts principally during mid-late S phase and is complete by G2. CENPS is more stably bound at the kinetochore than CENPX (PubMed:19620631, PubMed:24522885). During S phase, rapidly recruited to DNA interstrand cross-links that block replication (PubMed:20347428). Recruited to DNA damage sites about 20 minutes following UV irradiation, reaching a plateau after approximately 40 minutes (PubMed:24522885).</text>
</comment>
<comment type="alternative products">
    <event type="alternative splicing"/>
    <isoform>
        <id>Q8N2Z9-1</id>
        <name>1</name>
        <sequence type="displayed"/>
    </isoform>
    <isoform>
        <id>Q8N2Z9-2</id>
        <name>2</name>
        <sequence type="described" ref="VSP_020434"/>
    </isoform>
    <isoform>
        <id>Q8N2Z9-3</id>
        <name>3</name>
        <sequence type="described" ref="VSP_020432 VSP_020433"/>
    </isoform>
</comment>
<comment type="tissue specificity">
    <text evidence="2">Ubiquitously expressed.</text>
</comment>
<comment type="developmental stage">
    <text evidence="8">Expression varies across the cell cycle, with highest levels in G2 phase (at protein level). No statistically significant changes at the transcript level.</text>
</comment>
<comment type="similarity">
    <text evidence="12">Belongs to the TAF9 family. CENP-S/MHF1 subfamily.</text>
</comment>
<gene>
    <name type="primary">CENPS</name>
    <name type="synonym">APITD1</name>
    <name type="synonym">FAAP16</name>
    <name evidence="9 10" type="synonym">MHF1</name>
</gene>
<sequence>MEEEAETEEQQRFSYQQRLKAAVHYTVGCLCEEVALDKEMQFSKQTIAAISELTFRQCENFAKDLEMFARHAKRTTINTEDVKLLARRSNSLLKYITDKSEEIAQINLERKAQKKKKSEDGSKNSRQPAEAGVVESEN</sequence>
<name>CENPS_HUMAN</name>
<feature type="chain" id="PRO_0000249477" description="Centromere protein S">
    <location>
        <begin position="1"/>
        <end position="138"/>
    </location>
</feature>
<feature type="region of interest" description="Disordered" evidence="1">
    <location>
        <begin position="110"/>
        <end position="138"/>
    </location>
</feature>
<feature type="modified residue" description="N-acetylmethionine" evidence="13">
    <location>
        <position position="1"/>
    </location>
</feature>
<feature type="splice variant" id="VSP_020432" description="In isoform 3." evidence="11">
    <original>RHAKRTTI</original>
    <variation>SICRKRQE</variation>
    <location>
        <begin position="70"/>
        <end position="77"/>
    </location>
</feature>
<feature type="splice variant" id="VSP_020433" description="In isoform 3." evidence="11">
    <location>
        <begin position="78"/>
        <end position="138"/>
    </location>
</feature>
<feature type="splice variant" id="VSP_020434" description="In isoform 2." evidence="11">
    <original>SLLKYITDKSEEIAQINLERKAQKKKKSEDGSKNSRQPAEAGVVESEN</original>
    <variation>SLHMQEAAGIRKSSLLTFLAWWFEWTSQASAGPLIGEEAREVARRQEGAPPQQSARRDRMPCRNFFWKTFSSCK</variation>
    <location>
        <begin position="91"/>
        <end position="138"/>
    </location>
</feature>
<feature type="mutagenesis site" description="No effect on CENPX- and FANCM-binding; loss of double-stranded DNA-binding of the MHF heterodimer and of FANCM recruitment to fork DNA; partial decrease in FA core complex activity, as shown by lower levels of FANCD2 monoubiquitination and higher frequency of sister chromatin exchanges. Complete loss of CENPX- and FANCM-binding; when associated with 87-A-A-88." evidence="5">
    <original>KR</original>
    <variation>AA</variation>
    <location>
        <begin position="73"/>
        <end position="74"/>
    </location>
</feature>
<feature type="mutagenesis site" description="Partial loss of CENPX- and FANCM-binding; partial decrease in FA core complex activity, as shown by lower levels of FANCD2 monoubiquitination and higher frequency of sister chromatin exchanges. Complete loss of CENPX- and FANCM-binding; when associated with 73-A-A-74." evidence="5">
    <original>RR</original>
    <variation>AA</variation>
    <location>
        <begin position="87"/>
        <end position="88"/>
    </location>
</feature>
<feature type="helix" evidence="14">
    <location>
        <begin position="8"/>
        <end position="12"/>
    </location>
</feature>
<feature type="helix" evidence="16">
    <location>
        <begin position="15"/>
        <end position="38"/>
    </location>
</feature>
<feature type="helix" evidence="16">
    <location>
        <begin position="44"/>
        <end position="71"/>
    </location>
</feature>
<feature type="strand" evidence="16">
    <location>
        <begin position="75"/>
        <end position="77"/>
    </location>
</feature>
<feature type="helix" evidence="16">
    <location>
        <begin position="79"/>
        <end position="85"/>
    </location>
</feature>
<feature type="turn" evidence="15">
    <location>
        <begin position="86"/>
        <end position="88"/>
    </location>
</feature>
<feature type="helix" evidence="16">
    <location>
        <begin position="90"/>
        <end position="103"/>
    </location>
</feature>
<evidence type="ECO:0000256" key="1">
    <source>
        <dbReference type="SAM" id="MobiDB-lite"/>
    </source>
</evidence>
<evidence type="ECO:0000269" key="2">
    <source>
    </source>
</evidence>
<evidence type="ECO:0000269" key="3">
    <source>
    </source>
</evidence>
<evidence type="ECO:0000269" key="4">
    <source>
    </source>
</evidence>
<evidence type="ECO:0000269" key="5">
    <source>
    </source>
</evidence>
<evidence type="ECO:0000269" key="6">
    <source>
    </source>
</evidence>
<evidence type="ECO:0000269" key="7">
    <source>
    </source>
</evidence>
<evidence type="ECO:0000269" key="8">
    <source>
    </source>
</evidence>
<evidence type="ECO:0000303" key="9">
    <source>
    </source>
</evidence>
<evidence type="ECO:0000303" key="10">
    <source>
    </source>
</evidence>
<evidence type="ECO:0000303" key="11">
    <source ref="1"/>
</evidence>
<evidence type="ECO:0000305" key="12"/>
<evidence type="ECO:0007744" key="13">
    <source>
    </source>
</evidence>
<evidence type="ECO:0007829" key="14">
    <source>
        <dbReference type="PDB" id="4DRA"/>
    </source>
</evidence>
<evidence type="ECO:0007829" key="15">
    <source>
        <dbReference type="PDB" id="4E44"/>
    </source>
</evidence>
<evidence type="ECO:0007829" key="16">
    <source>
        <dbReference type="PDB" id="4NE3"/>
    </source>
</evidence>
<proteinExistence type="evidence at protein level"/>
<keyword id="KW-0002">3D-structure</keyword>
<keyword id="KW-0007">Acetylation</keyword>
<keyword id="KW-0025">Alternative splicing</keyword>
<keyword id="KW-0131">Cell cycle</keyword>
<keyword id="KW-0132">Cell division</keyword>
<keyword id="KW-0137">Centromere</keyword>
<keyword id="KW-0158">Chromosome</keyword>
<keyword id="KW-0227">DNA damage</keyword>
<keyword id="KW-0234">DNA repair</keyword>
<keyword id="KW-0238">DNA-binding</keyword>
<keyword id="KW-0995">Kinetochore</keyword>
<keyword id="KW-0498">Mitosis</keyword>
<keyword id="KW-0539">Nucleus</keyword>
<keyword id="KW-1267">Proteomics identification</keyword>
<keyword id="KW-1185">Reference proteome</keyword>